<evidence type="ECO:0000250" key="1"/>
<evidence type="ECO:0000250" key="2">
    <source>
        <dbReference type="UniProtKB" id="P00157"/>
    </source>
</evidence>
<evidence type="ECO:0000255" key="3">
    <source>
        <dbReference type="PROSITE-ProRule" id="PRU00967"/>
    </source>
</evidence>
<evidence type="ECO:0000255" key="4">
    <source>
        <dbReference type="PROSITE-ProRule" id="PRU00968"/>
    </source>
</evidence>
<keyword id="KW-0249">Electron transport</keyword>
<keyword id="KW-0349">Heme</keyword>
<keyword id="KW-0408">Iron</keyword>
<keyword id="KW-0472">Membrane</keyword>
<keyword id="KW-0479">Metal-binding</keyword>
<keyword id="KW-0496">Mitochondrion</keyword>
<keyword id="KW-0999">Mitochondrion inner membrane</keyword>
<keyword id="KW-0679">Respiratory chain</keyword>
<keyword id="KW-0812">Transmembrane</keyword>
<keyword id="KW-1133">Transmembrane helix</keyword>
<keyword id="KW-0813">Transport</keyword>
<keyword id="KW-0830">Ubiquinone</keyword>
<name>CYB_EULMM</name>
<protein>
    <recommendedName>
        <fullName>Cytochrome b</fullName>
    </recommendedName>
    <alternativeName>
        <fullName>Complex III subunit 3</fullName>
    </alternativeName>
    <alternativeName>
        <fullName>Complex III subunit III</fullName>
    </alternativeName>
    <alternativeName>
        <fullName>Cytochrome b-c1 complex subunit 3</fullName>
    </alternativeName>
    <alternativeName>
        <fullName>Ubiquinol-cytochrome-c reductase complex cytochrome b subunit</fullName>
    </alternativeName>
</protein>
<dbReference type="EMBL" id="AF081049">
    <property type="protein sequence ID" value="AAD13166.1"/>
    <property type="molecule type" value="Genomic_DNA"/>
</dbReference>
<dbReference type="SMR" id="O99797"/>
<dbReference type="GO" id="GO:0005743">
    <property type="term" value="C:mitochondrial inner membrane"/>
    <property type="evidence" value="ECO:0007669"/>
    <property type="project" value="UniProtKB-SubCell"/>
</dbReference>
<dbReference type="GO" id="GO:0045275">
    <property type="term" value="C:respiratory chain complex III"/>
    <property type="evidence" value="ECO:0007669"/>
    <property type="project" value="InterPro"/>
</dbReference>
<dbReference type="GO" id="GO:0046872">
    <property type="term" value="F:metal ion binding"/>
    <property type="evidence" value="ECO:0007669"/>
    <property type="project" value="UniProtKB-KW"/>
</dbReference>
<dbReference type="GO" id="GO:0008121">
    <property type="term" value="F:ubiquinol-cytochrome-c reductase activity"/>
    <property type="evidence" value="ECO:0007669"/>
    <property type="project" value="InterPro"/>
</dbReference>
<dbReference type="GO" id="GO:0006122">
    <property type="term" value="P:mitochondrial electron transport, ubiquinol to cytochrome c"/>
    <property type="evidence" value="ECO:0007669"/>
    <property type="project" value="TreeGrafter"/>
</dbReference>
<dbReference type="CDD" id="cd00290">
    <property type="entry name" value="cytochrome_b_C"/>
    <property type="match status" value="1"/>
</dbReference>
<dbReference type="CDD" id="cd00284">
    <property type="entry name" value="Cytochrome_b_N"/>
    <property type="match status" value="1"/>
</dbReference>
<dbReference type="FunFam" id="1.20.810.10:FF:000002">
    <property type="entry name" value="Cytochrome b"/>
    <property type="match status" value="1"/>
</dbReference>
<dbReference type="Gene3D" id="1.20.810.10">
    <property type="entry name" value="Cytochrome Bc1 Complex, Chain C"/>
    <property type="match status" value="1"/>
</dbReference>
<dbReference type="InterPro" id="IPR005798">
    <property type="entry name" value="Cyt_b/b6_C"/>
</dbReference>
<dbReference type="InterPro" id="IPR036150">
    <property type="entry name" value="Cyt_b/b6_C_sf"/>
</dbReference>
<dbReference type="InterPro" id="IPR005797">
    <property type="entry name" value="Cyt_b/b6_N"/>
</dbReference>
<dbReference type="InterPro" id="IPR027387">
    <property type="entry name" value="Cytb/b6-like_sf"/>
</dbReference>
<dbReference type="InterPro" id="IPR030689">
    <property type="entry name" value="Cytochrome_b"/>
</dbReference>
<dbReference type="InterPro" id="IPR048260">
    <property type="entry name" value="Cytochrome_b_C_euk/bac"/>
</dbReference>
<dbReference type="InterPro" id="IPR048259">
    <property type="entry name" value="Cytochrome_b_N_euk/bac"/>
</dbReference>
<dbReference type="InterPro" id="IPR016174">
    <property type="entry name" value="Di-haem_cyt_TM"/>
</dbReference>
<dbReference type="PANTHER" id="PTHR19271">
    <property type="entry name" value="CYTOCHROME B"/>
    <property type="match status" value="1"/>
</dbReference>
<dbReference type="PANTHER" id="PTHR19271:SF16">
    <property type="entry name" value="CYTOCHROME B"/>
    <property type="match status" value="1"/>
</dbReference>
<dbReference type="Pfam" id="PF00032">
    <property type="entry name" value="Cytochrom_B_C"/>
    <property type="match status" value="1"/>
</dbReference>
<dbReference type="Pfam" id="PF00033">
    <property type="entry name" value="Cytochrome_B"/>
    <property type="match status" value="1"/>
</dbReference>
<dbReference type="PIRSF" id="PIRSF038885">
    <property type="entry name" value="COB"/>
    <property type="match status" value="1"/>
</dbReference>
<dbReference type="SUPFAM" id="SSF81648">
    <property type="entry name" value="a domain/subunit of cytochrome bc1 complex (Ubiquinol-cytochrome c reductase)"/>
    <property type="match status" value="1"/>
</dbReference>
<dbReference type="SUPFAM" id="SSF81342">
    <property type="entry name" value="Transmembrane di-heme cytochromes"/>
    <property type="match status" value="1"/>
</dbReference>
<dbReference type="PROSITE" id="PS51003">
    <property type="entry name" value="CYTB_CTER"/>
    <property type="match status" value="1"/>
</dbReference>
<dbReference type="PROSITE" id="PS51002">
    <property type="entry name" value="CYTB_NTER"/>
    <property type="match status" value="1"/>
</dbReference>
<accession>O99797</accession>
<proteinExistence type="inferred from homology"/>
<feature type="chain" id="PRO_0000060956" description="Cytochrome b">
    <location>
        <begin position="1"/>
        <end position="379"/>
    </location>
</feature>
<feature type="transmembrane region" description="Helical" evidence="2">
    <location>
        <begin position="33"/>
        <end position="53"/>
    </location>
</feature>
<feature type="transmembrane region" description="Helical" evidence="2">
    <location>
        <begin position="77"/>
        <end position="98"/>
    </location>
</feature>
<feature type="transmembrane region" description="Helical" evidence="2">
    <location>
        <begin position="113"/>
        <end position="133"/>
    </location>
</feature>
<feature type="transmembrane region" description="Helical" evidence="2">
    <location>
        <begin position="178"/>
        <end position="198"/>
    </location>
</feature>
<feature type="transmembrane region" description="Helical" evidence="2">
    <location>
        <begin position="226"/>
        <end position="246"/>
    </location>
</feature>
<feature type="transmembrane region" description="Helical" evidence="2">
    <location>
        <begin position="288"/>
        <end position="308"/>
    </location>
</feature>
<feature type="transmembrane region" description="Helical" evidence="2">
    <location>
        <begin position="320"/>
        <end position="340"/>
    </location>
</feature>
<feature type="transmembrane region" description="Helical" evidence="2">
    <location>
        <begin position="347"/>
        <end position="367"/>
    </location>
</feature>
<feature type="binding site" description="axial binding residue" evidence="2">
    <location>
        <position position="83"/>
    </location>
    <ligand>
        <name>heme b</name>
        <dbReference type="ChEBI" id="CHEBI:60344"/>
        <label>b562</label>
    </ligand>
    <ligandPart>
        <name>Fe</name>
        <dbReference type="ChEBI" id="CHEBI:18248"/>
    </ligandPart>
</feature>
<feature type="binding site" description="axial binding residue" evidence="2">
    <location>
        <position position="97"/>
    </location>
    <ligand>
        <name>heme b</name>
        <dbReference type="ChEBI" id="CHEBI:60344"/>
        <label>b566</label>
    </ligand>
    <ligandPart>
        <name>Fe</name>
        <dbReference type="ChEBI" id="CHEBI:18248"/>
    </ligandPart>
</feature>
<feature type="binding site" description="axial binding residue" evidence="2">
    <location>
        <position position="182"/>
    </location>
    <ligand>
        <name>heme b</name>
        <dbReference type="ChEBI" id="CHEBI:60344"/>
        <label>b562</label>
    </ligand>
    <ligandPart>
        <name>Fe</name>
        <dbReference type="ChEBI" id="CHEBI:18248"/>
    </ligandPart>
</feature>
<feature type="binding site" description="axial binding residue" evidence="2">
    <location>
        <position position="196"/>
    </location>
    <ligand>
        <name>heme b</name>
        <dbReference type="ChEBI" id="CHEBI:60344"/>
        <label>b566</label>
    </ligand>
    <ligandPart>
        <name>Fe</name>
        <dbReference type="ChEBI" id="CHEBI:18248"/>
    </ligandPart>
</feature>
<feature type="binding site" evidence="2">
    <location>
        <position position="201"/>
    </location>
    <ligand>
        <name>a ubiquinone</name>
        <dbReference type="ChEBI" id="CHEBI:16389"/>
    </ligand>
</feature>
<sequence length="379" mass="42639">MNNIRKNHPLMKIMNNSFIDLPAPSNISSWWNFGSLLGACLALQIITGLFLAMHYTGDTTTVFSSVAHIWRDVNYGWIIRYLHANGASMFFLCLFIHIGRGLYYGSFTLTGTWNIGIILLFTVMATAFMGYVLPWGQMSFWGATVITNLLSAIPYIGTNLVEWIWGGFSVDKATLTRFFAFHFILPFIIAALVLVHLLFLHETGSNNPLGTSSDSDKIPFHPYYTIKDLLGLLLLILLVMMLVLFSPDLLGDPDNYTPANPLSTPPHIKPEWYFLFAYAILRSIPNKLGGVLALISSILILAIIPTLHMAKQRSMLFRPLSQCLFWTLTADLFVLTWIGGQPVEYPFITIGQAASILYFALILILMPMVSLIENKMLKW</sequence>
<organism>
    <name type="scientific">Eulemur macaco macaco</name>
    <name type="common">Black lemur</name>
    <dbReference type="NCBI Taxonomy" id="30603"/>
    <lineage>
        <taxon>Eukaryota</taxon>
        <taxon>Metazoa</taxon>
        <taxon>Chordata</taxon>
        <taxon>Craniata</taxon>
        <taxon>Vertebrata</taxon>
        <taxon>Euteleostomi</taxon>
        <taxon>Mammalia</taxon>
        <taxon>Eutheria</taxon>
        <taxon>Euarchontoglires</taxon>
        <taxon>Primates</taxon>
        <taxon>Strepsirrhini</taxon>
        <taxon>Lemuriformes</taxon>
        <taxon>Lemuridae</taxon>
        <taxon>Eulemur</taxon>
    </lineage>
</organism>
<comment type="function">
    <text evidence="2">Component of the ubiquinol-cytochrome c reductase complex (complex III or cytochrome b-c1 complex) that is part of the mitochondrial respiratory chain. The b-c1 complex mediates electron transfer from ubiquinol to cytochrome c. Contributes to the generation of a proton gradient across the mitochondrial membrane that is then used for ATP synthesis.</text>
</comment>
<comment type="cofactor">
    <cofactor evidence="2">
        <name>heme b</name>
        <dbReference type="ChEBI" id="CHEBI:60344"/>
    </cofactor>
    <text evidence="2">Binds 2 heme b groups non-covalently.</text>
</comment>
<comment type="subunit">
    <text evidence="2">The cytochrome bc1 complex contains 11 subunits: 3 respiratory subunits (MT-CYB, CYC1 and UQCRFS1), 2 core proteins (UQCRC1 and UQCRC2) and 6 low-molecular weight proteins (UQCRH/QCR6, UQCRB/QCR7, UQCRQ/QCR8, UQCR10/QCR9, UQCR11/QCR10 and a cleavage product of UQCRFS1). This cytochrome bc1 complex then forms a dimer.</text>
</comment>
<comment type="subcellular location">
    <subcellularLocation>
        <location evidence="2">Mitochondrion inner membrane</location>
        <topology evidence="2">Multi-pass membrane protein</topology>
    </subcellularLocation>
</comment>
<comment type="miscellaneous">
    <text evidence="1">Heme 1 (or BL or b562) is low-potential and absorbs at about 562 nm, and heme 2 (or BH or b566) is high-potential and absorbs at about 566 nm.</text>
</comment>
<comment type="similarity">
    <text evidence="3 4">Belongs to the cytochrome b family.</text>
</comment>
<comment type="caution">
    <text evidence="2">The full-length protein contains only eight transmembrane helices, not nine as predicted by bioinformatics tools.</text>
</comment>
<geneLocation type="mitochondrion"/>
<gene>
    <name type="primary">MT-CYB</name>
    <name type="synonym">COB</name>
    <name type="synonym">CYTB</name>
    <name type="synonym">MTCYB</name>
</gene>
<reference key="1">
    <citation type="journal article" date="1999" name="Cladistics">
        <title>Phylogeny of the Lemuridae: effects of character and taxon sampling on the resolution of species relationships within Eulemur.</title>
        <authorList>
            <person name="Yoder A.D."/>
            <person name="Irwin J.A."/>
        </authorList>
    </citation>
    <scope>NUCLEOTIDE SEQUENCE [GENOMIC DNA]</scope>
    <source>
        <strain>Isolate DUPC 6404m</strain>
        <tissue>Spleen</tissue>
    </source>
</reference>